<proteinExistence type="inferred from homology"/>
<protein>
    <recommendedName>
        <fullName>Putative shikimate kinase</fullName>
        <shortName evidence="1">SK</shortName>
        <ecNumber evidence="1">2.7.1.71</ecNumber>
    </recommendedName>
</protein>
<gene>
    <name evidence="1" type="primary">aroK</name>
    <name type="ordered locus">NMB1813</name>
</gene>
<organism>
    <name type="scientific">Neisseria meningitidis serogroup B (strain ATCC BAA-335 / MC58)</name>
    <dbReference type="NCBI Taxonomy" id="122586"/>
    <lineage>
        <taxon>Bacteria</taxon>
        <taxon>Pseudomonadati</taxon>
        <taxon>Pseudomonadota</taxon>
        <taxon>Betaproteobacteria</taxon>
        <taxon>Neisseriales</taxon>
        <taxon>Neisseriaceae</taxon>
        <taxon>Neisseria</taxon>
    </lineage>
</organism>
<sequence>MKNFNGKLILIGLMGAGKTTLGRQMAQRLDYRFYDSDHEIAAAAGVPIPTIFEMEGEQGFRSRETAILKKLVILPHIVLSTGGGAVLKEENRALIRKSGTVVYLHAPPETLLERTRCDNSRPLLQVADPLAKLRELYAARDPVYRQTADFTVESANCRETVQTLLKRLSR</sequence>
<dbReference type="EC" id="2.7.1.71" evidence="1"/>
<dbReference type="EMBL" id="AE002098">
    <property type="protein sequence ID" value="AAF42148.1"/>
    <property type="molecule type" value="Genomic_DNA"/>
</dbReference>
<dbReference type="PIR" id="F81038">
    <property type="entry name" value="F81038"/>
</dbReference>
<dbReference type="RefSeq" id="NP_274810.1">
    <property type="nucleotide sequence ID" value="NC_003112.2"/>
</dbReference>
<dbReference type="RefSeq" id="WP_002222978.1">
    <property type="nucleotide sequence ID" value="NC_003112.2"/>
</dbReference>
<dbReference type="SMR" id="P63600"/>
<dbReference type="FunCoup" id="P63600">
    <property type="interactions" value="490"/>
</dbReference>
<dbReference type="STRING" id="122586.NMB1813"/>
<dbReference type="PaxDb" id="122586-NMB1813"/>
<dbReference type="KEGG" id="nme:NMB1813"/>
<dbReference type="PATRIC" id="fig|122586.8.peg.2307"/>
<dbReference type="HOGENOM" id="CLU_057607_2_2_4"/>
<dbReference type="InParanoid" id="P63600"/>
<dbReference type="OrthoDB" id="9800332at2"/>
<dbReference type="UniPathway" id="UPA00053">
    <property type="reaction ID" value="UER00088"/>
</dbReference>
<dbReference type="Proteomes" id="UP000000425">
    <property type="component" value="Chromosome"/>
</dbReference>
<dbReference type="GO" id="GO:0005829">
    <property type="term" value="C:cytosol"/>
    <property type="evidence" value="ECO:0000318"/>
    <property type="project" value="GO_Central"/>
</dbReference>
<dbReference type="GO" id="GO:0005524">
    <property type="term" value="F:ATP binding"/>
    <property type="evidence" value="ECO:0007669"/>
    <property type="project" value="UniProtKB-UniRule"/>
</dbReference>
<dbReference type="GO" id="GO:0000287">
    <property type="term" value="F:magnesium ion binding"/>
    <property type="evidence" value="ECO:0007669"/>
    <property type="project" value="UniProtKB-UniRule"/>
</dbReference>
<dbReference type="GO" id="GO:0004765">
    <property type="term" value="F:shikimate kinase activity"/>
    <property type="evidence" value="ECO:0000318"/>
    <property type="project" value="GO_Central"/>
</dbReference>
<dbReference type="GO" id="GO:0008652">
    <property type="term" value="P:amino acid biosynthetic process"/>
    <property type="evidence" value="ECO:0007669"/>
    <property type="project" value="UniProtKB-KW"/>
</dbReference>
<dbReference type="GO" id="GO:0009073">
    <property type="term" value="P:aromatic amino acid family biosynthetic process"/>
    <property type="evidence" value="ECO:0007669"/>
    <property type="project" value="UniProtKB-KW"/>
</dbReference>
<dbReference type="GO" id="GO:0009423">
    <property type="term" value="P:chorismate biosynthetic process"/>
    <property type="evidence" value="ECO:0007669"/>
    <property type="project" value="UniProtKB-UniRule"/>
</dbReference>
<dbReference type="CDD" id="cd00464">
    <property type="entry name" value="SK"/>
    <property type="match status" value="1"/>
</dbReference>
<dbReference type="FunFam" id="3.40.50.300:FF:002237">
    <property type="entry name" value="Shikimate kinase"/>
    <property type="match status" value="1"/>
</dbReference>
<dbReference type="Gene3D" id="3.40.50.300">
    <property type="entry name" value="P-loop containing nucleotide triphosphate hydrolases"/>
    <property type="match status" value="1"/>
</dbReference>
<dbReference type="HAMAP" id="MF_00109">
    <property type="entry name" value="Shikimate_kinase"/>
    <property type="match status" value="1"/>
</dbReference>
<dbReference type="InterPro" id="IPR027417">
    <property type="entry name" value="P-loop_NTPase"/>
</dbReference>
<dbReference type="InterPro" id="IPR031322">
    <property type="entry name" value="Shikimate/glucono_kinase"/>
</dbReference>
<dbReference type="InterPro" id="IPR000623">
    <property type="entry name" value="Shikimate_kinase/TSH1"/>
</dbReference>
<dbReference type="InterPro" id="IPR023000">
    <property type="entry name" value="Shikimate_kinase_CS"/>
</dbReference>
<dbReference type="PANTHER" id="PTHR21087">
    <property type="entry name" value="SHIKIMATE KINASE"/>
    <property type="match status" value="1"/>
</dbReference>
<dbReference type="PANTHER" id="PTHR21087:SF16">
    <property type="entry name" value="SHIKIMATE KINASE 1, CHLOROPLASTIC"/>
    <property type="match status" value="1"/>
</dbReference>
<dbReference type="Pfam" id="PF01202">
    <property type="entry name" value="SKI"/>
    <property type="match status" value="1"/>
</dbReference>
<dbReference type="PRINTS" id="PR01100">
    <property type="entry name" value="SHIKIMTKNASE"/>
</dbReference>
<dbReference type="SUPFAM" id="SSF52540">
    <property type="entry name" value="P-loop containing nucleoside triphosphate hydrolases"/>
    <property type="match status" value="1"/>
</dbReference>
<dbReference type="PROSITE" id="PS01128">
    <property type="entry name" value="SHIKIMATE_KINASE"/>
    <property type="match status" value="1"/>
</dbReference>
<evidence type="ECO:0000255" key="1">
    <source>
        <dbReference type="HAMAP-Rule" id="MF_00109"/>
    </source>
</evidence>
<name>AROK_NEIMB</name>
<feature type="chain" id="PRO_0000192396" description="Putative shikimate kinase">
    <location>
        <begin position="1"/>
        <end position="170"/>
    </location>
</feature>
<feature type="binding site" evidence="1">
    <location>
        <begin position="15"/>
        <end position="20"/>
    </location>
    <ligand>
        <name>ATP</name>
        <dbReference type="ChEBI" id="CHEBI:30616"/>
    </ligand>
</feature>
<feature type="binding site" evidence="1">
    <location>
        <position position="19"/>
    </location>
    <ligand>
        <name>Mg(2+)</name>
        <dbReference type="ChEBI" id="CHEBI:18420"/>
    </ligand>
</feature>
<feature type="binding site" evidence="1">
    <location>
        <position position="37"/>
    </location>
    <ligand>
        <name>substrate</name>
    </ligand>
</feature>
<feature type="binding site" evidence="1">
    <location>
        <position position="61"/>
    </location>
    <ligand>
        <name>substrate</name>
    </ligand>
</feature>
<feature type="binding site" evidence="1">
    <location>
        <position position="83"/>
    </location>
    <ligand>
        <name>substrate</name>
    </ligand>
</feature>
<feature type="binding site" evidence="1">
    <location>
        <position position="121"/>
    </location>
    <ligand>
        <name>ATP</name>
        <dbReference type="ChEBI" id="CHEBI:30616"/>
    </ligand>
</feature>
<feature type="binding site" evidence="1">
    <location>
        <position position="140"/>
    </location>
    <ligand>
        <name>substrate</name>
    </ligand>
</feature>
<accession>P63600</accession>
<accession>Q9JQV1</accession>
<reference key="1">
    <citation type="journal article" date="2000" name="Science">
        <title>Complete genome sequence of Neisseria meningitidis serogroup B strain MC58.</title>
        <authorList>
            <person name="Tettelin H."/>
            <person name="Saunders N.J."/>
            <person name="Heidelberg J.F."/>
            <person name="Jeffries A.C."/>
            <person name="Nelson K.E."/>
            <person name="Eisen J.A."/>
            <person name="Ketchum K.A."/>
            <person name="Hood D.W."/>
            <person name="Peden J.F."/>
            <person name="Dodson R.J."/>
            <person name="Nelson W.C."/>
            <person name="Gwinn M.L."/>
            <person name="DeBoy R.T."/>
            <person name="Peterson J.D."/>
            <person name="Hickey E.K."/>
            <person name="Haft D.H."/>
            <person name="Salzberg S.L."/>
            <person name="White O."/>
            <person name="Fleischmann R.D."/>
            <person name="Dougherty B.A."/>
            <person name="Mason T.M."/>
            <person name="Ciecko A."/>
            <person name="Parksey D.S."/>
            <person name="Blair E."/>
            <person name="Cittone H."/>
            <person name="Clark E.B."/>
            <person name="Cotton M.D."/>
            <person name="Utterback T.R."/>
            <person name="Khouri H.M."/>
            <person name="Qin H."/>
            <person name="Vamathevan J.J."/>
            <person name="Gill J."/>
            <person name="Scarlato V."/>
            <person name="Masignani V."/>
            <person name="Pizza M."/>
            <person name="Grandi G."/>
            <person name="Sun L."/>
            <person name="Smith H.O."/>
            <person name="Fraser C.M."/>
            <person name="Moxon E.R."/>
            <person name="Rappuoli R."/>
            <person name="Venter J.C."/>
        </authorList>
    </citation>
    <scope>NUCLEOTIDE SEQUENCE [LARGE SCALE GENOMIC DNA]</scope>
    <source>
        <strain>ATCC BAA-335 / MC58</strain>
    </source>
</reference>
<comment type="function">
    <text evidence="1">Catalyzes the specific phosphorylation of the 3-hydroxyl group of shikimic acid using ATP as a cosubstrate.</text>
</comment>
<comment type="catalytic activity">
    <reaction evidence="1">
        <text>shikimate + ATP = 3-phosphoshikimate + ADP + H(+)</text>
        <dbReference type="Rhea" id="RHEA:13121"/>
        <dbReference type="ChEBI" id="CHEBI:15378"/>
        <dbReference type="ChEBI" id="CHEBI:30616"/>
        <dbReference type="ChEBI" id="CHEBI:36208"/>
        <dbReference type="ChEBI" id="CHEBI:145989"/>
        <dbReference type="ChEBI" id="CHEBI:456216"/>
        <dbReference type="EC" id="2.7.1.71"/>
    </reaction>
</comment>
<comment type="cofactor">
    <cofactor evidence="1">
        <name>Mg(2+)</name>
        <dbReference type="ChEBI" id="CHEBI:18420"/>
    </cofactor>
    <text evidence="1">Binds 1 Mg(2+) ion per subunit.</text>
</comment>
<comment type="pathway">
    <text evidence="1">Metabolic intermediate biosynthesis; chorismate biosynthesis; chorismate from D-erythrose 4-phosphate and phosphoenolpyruvate: step 5/7.</text>
</comment>
<comment type="subunit">
    <text evidence="1">Monomer.</text>
</comment>
<comment type="subcellular location">
    <subcellularLocation>
        <location evidence="1">Cytoplasm</location>
    </subcellularLocation>
</comment>
<comment type="similarity">
    <text evidence="1">Belongs to the shikimate kinase family.</text>
</comment>
<keyword id="KW-0028">Amino-acid biosynthesis</keyword>
<keyword id="KW-0057">Aromatic amino acid biosynthesis</keyword>
<keyword id="KW-0067">ATP-binding</keyword>
<keyword id="KW-0963">Cytoplasm</keyword>
<keyword id="KW-0418">Kinase</keyword>
<keyword id="KW-0460">Magnesium</keyword>
<keyword id="KW-0479">Metal-binding</keyword>
<keyword id="KW-0547">Nucleotide-binding</keyword>
<keyword id="KW-1185">Reference proteome</keyword>
<keyword id="KW-0808">Transferase</keyword>